<comment type="function">
    <text evidence="2">One of the essential components for the initiation of protein synthesis. Protects formylmethionyl-tRNA from spontaneous hydrolysis and promotes its binding to the 30S ribosomal subunits. Also involved in the hydrolysis of GTP during the formation of the 70S ribosomal complex.</text>
</comment>
<comment type="subcellular location">
    <subcellularLocation>
        <location evidence="2">Cytoplasm</location>
    </subcellularLocation>
</comment>
<comment type="similarity">
    <text evidence="2">Belongs to the TRAFAC class translation factor GTPase superfamily. Classic translation factor GTPase family. IF-2 subfamily.</text>
</comment>
<name>IF2_PSEFS</name>
<keyword id="KW-0963">Cytoplasm</keyword>
<keyword id="KW-0342">GTP-binding</keyword>
<keyword id="KW-0396">Initiation factor</keyword>
<keyword id="KW-0547">Nucleotide-binding</keyword>
<keyword id="KW-0648">Protein biosynthesis</keyword>
<reference key="1">
    <citation type="journal article" date="2009" name="Genome Biol.">
        <title>Genomic and genetic analyses of diversity and plant interactions of Pseudomonas fluorescens.</title>
        <authorList>
            <person name="Silby M.W."/>
            <person name="Cerdeno-Tarraga A.M."/>
            <person name="Vernikos G.S."/>
            <person name="Giddens S.R."/>
            <person name="Jackson R.W."/>
            <person name="Preston G.M."/>
            <person name="Zhang X.-X."/>
            <person name="Moon C.D."/>
            <person name="Gehrig S.M."/>
            <person name="Godfrey S.A.C."/>
            <person name="Knight C.G."/>
            <person name="Malone J.G."/>
            <person name="Robinson Z."/>
            <person name="Spiers A.J."/>
            <person name="Harris S."/>
            <person name="Challis G.L."/>
            <person name="Yaxley A.M."/>
            <person name="Harris D."/>
            <person name="Seeger K."/>
            <person name="Murphy L."/>
            <person name="Rutter S."/>
            <person name="Squares R."/>
            <person name="Quail M.A."/>
            <person name="Saunders E."/>
            <person name="Mavromatis K."/>
            <person name="Brettin T.S."/>
            <person name="Bentley S.D."/>
            <person name="Hothersall J."/>
            <person name="Stephens E."/>
            <person name="Thomas C.M."/>
            <person name="Parkhill J."/>
            <person name="Levy S.B."/>
            <person name="Rainey P.B."/>
            <person name="Thomson N.R."/>
        </authorList>
    </citation>
    <scope>NUCLEOTIDE SEQUENCE [LARGE SCALE GENOMIC DNA]</scope>
    <source>
        <strain>SBW25</strain>
    </source>
</reference>
<evidence type="ECO:0000250" key="1"/>
<evidence type="ECO:0000255" key="2">
    <source>
        <dbReference type="HAMAP-Rule" id="MF_00100"/>
    </source>
</evidence>
<evidence type="ECO:0000256" key="3">
    <source>
        <dbReference type="SAM" id="MobiDB-lite"/>
    </source>
</evidence>
<feature type="chain" id="PRO_1000202782" description="Translation initiation factor IF-2">
    <location>
        <begin position="1"/>
        <end position="841"/>
    </location>
</feature>
<feature type="domain" description="tr-type G">
    <location>
        <begin position="341"/>
        <end position="510"/>
    </location>
</feature>
<feature type="region of interest" description="Disordered" evidence="3">
    <location>
        <begin position="94"/>
        <end position="258"/>
    </location>
</feature>
<feature type="region of interest" description="G1" evidence="1">
    <location>
        <begin position="350"/>
        <end position="357"/>
    </location>
</feature>
<feature type="region of interest" description="G2" evidence="1">
    <location>
        <begin position="375"/>
        <end position="379"/>
    </location>
</feature>
<feature type="region of interest" description="G3" evidence="1">
    <location>
        <begin position="396"/>
        <end position="399"/>
    </location>
</feature>
<feature type="region of interest" description="G4" evidence="1">
    <location>
        <begin position="450"/>
        <end position="453"/>
    </location>
</feature>
<feature type="region of interest" description="G5" evidence="1">
    <location>
        <begin position="486"/>
        <end position="488"/>
    </location>
</feature>
<feature type="compositionally biased region" description="Basic and acidic residues" evidence="3">
    <location>
        <begin position="96"/>
        <end position="136"/>
    </location>
</feature>
<feature type="compositionally biased region" description="Low complexity" evidence="3">
    <location>
        <begin position="137"/>
        <end position="173"/>
    </location>
</feature>
<feature type="compositionally biased region" description="Basic and acidic residues" evidence="3">
    <location>
        <begin position="174"/>
        <end position="194"/>
    </location>
</feature>
<feature type="compositionally biased region" description="Basic and acidic residues" evidence="3">
    <location>
        <begin position="200"/>
        <end position="217"/>
    </location>
</feature>
<feature type="compositionally biased region" description="Basic and acidic residues" evidence="3">
    <location>
        <begin position="225"/>
        <end position="234"/>
    </location>
</feature>
<feature type="compositionally biased region" description="Basic residues" evidence="3">
    <location>
        <begin position="235"/>
        <end position="248"/>
    </location>
</feature>
<feature type="binding site" evidence="2">
    <location>
        <begin position="350"/>
        <end position="357"/>
    </location>
    <ligand>
        <name>GTP</name>
        <dbReference type="ChEBI" id="CHEBI:37565"/>
    </ligand>
</feature>
<feature type="binding site" evidence="2">
    <location>
        <begin position="396"/>
        <end position="400"/>
    </location>
    <ligand>
        <name>GTP</name>
        <dbReference type="ChEBI" id="CHEBI:37565"/>
    </ligand>
</feature>
<feature type="binding site" evidence="2">
    <location>
        <begin position="450"/>
        <end position="453"/>
    </location>
    <ligand>
        <name>GTP</name>
        <dbReference type="ChEBI" id="CHEBI:37565"/>
    </ligand>
</feature>
<gene>
    <name evidence="2" type="primary">infB</name>
    <name type="ordered locus">PFLU_5253</name>
</gene>
<organism>
    <name type="scientific">Pseudomonas fluorescens (strain SBW25)</name>
    <dbReference type="NCBI Taxonomy" id="216595"/>
    <lineage>
        <taxon>Bacteria</taxon>
        <taxon>Pseudomonadati</taxon>
        <taxon>Pseudomonadota</taxon>
        <taxon>Gammaproteobacteria</taxon>
        <taxon>Pseudomonadales</taxon>
        <taxon>Pseudomonadaceae</taxon>
        <taxon>Pseudomonas</taxon>
    </lineage>
</organism>
<dbReference type="EMBL" id="AM181176">
    <property type="protein sequence ID" value="CAY52351.1"/>
    <property type="molecule type" value="Genomic_DNA"/>
</dbReference>
<dbReference type="RefSeq" id="WP_015885918.1">
    <property type="nucleotide sequence ID" value="NC_012660.1"/>
</dbReference>
<dbReference type="SMR" id="C3K259"/>
<dbReference type="STRING" id="294.SRM1_00826"/>
<dbReference type="eggNOG" id="COG0532">
    <property type="taxonomic scope" value="Bacteria"/>
</dbReference>
<dbReference type="HOGENOM" id="CLU_006301_6_1_6"/>
<dbReference type="OrthoDB" id="9811804at2"/>
<dbReference type="GO" id="GO:0005829">
    <property type="term" value="C:cytosol"/>
    <property type="evidence" value="ECO:0007669"/>
    <property type="project" value="TreeGrafter"/>
</dbReference>
<dbReference type="GO" id="GO:0005525">
    <property type="term" value="F:GTP binding"/>
    <property type="evidence" value="ECO:0007669"/>
    <property type="project" value="UniProtKB-KW"/>
</dbReference>
<dbReference type="GO" id="GO:0003924">
    <property type="term" value="F:GTPase activity"/>
    <property type="evidence" value="ECO:0007669"/>
    <property type="project" value="UniProtKB-UniRule"/>
</dbReference>
<dbReference type="GO" id="GO:0003743">
    <property type="term" value="F:translation initiation factor activity"/>
    <property type="evidence" value="ECO:0007669"/>
    <property type="project" value="UniProtKB-UniRule"/>
</dbReference>
<dbReference type="CDD" id="cd01887">
    <property type="entry name" value="IF2_eIF5B"/>
    <property type="match status" value="1"/>
</dbReference>
<dbReference type="CDD" id="cd03702">
    <property type="entry name" value="IF2_mtIF2_II"/>
    <property type="match status" value="1"/>
</dbReference>
<dbReference type="CDD" id="cd03692">
    <property type="entry name" value="mtIF2_IVc"/>
    <property type="match status" value="1"/>
</dbReference>
<dbReference type="FunFam" id="2.40.30.10:FF:000007">
    <property type="entry name" value="Translation initiation factor IF-2"/>
    <property type="match status" value="1"/>
</dbReference>
<dbReference type="FunFam" id="2.40.30.10:FF:000008">
    <property type="entry name" value="Translation initiation factor IF-2"/>
    <property type="match status" value="1"/>
</dbReference>
<dbReference type="FunFam" id="3.40.50.10050:FF:000001">
    <property type="entry name" value="Translation initiation factor IF-2"/>
    <property type="match status" value="1"/>
</dbReference>
<dbReference type="FunFam" id="3.40.50.300:FF:000019">
    <property type="entry name" value="Translation initiation factor IF-2"/>
    <property type="match status" value="1"/>
</dbReference>
<dbReference type="Gene3D" id="3.40.50.300">
    <property type="entry name" value="P-loop containing nucleotide triphosphate hydrolases"/>
    <property type="match status" value="1"/>
</dbReference>
<dbReference type="Gene3D" id="3.30.56.50">
    <property type="entry name" value="Putative DNA-binding domain, N-terminal subdomain of bacterial translation initiation factor IF2"/>
    <property type="match status" value="1"/>
</dbReference>
<dbReference type="Gene3D" id="2.40.30.10">
    <property type="entry name" value="Translation factors"/>
    <property type="match status" value="2"/>
</dbReference>
<dbReference type="Gene3D" id="3.40.50.10050">
    <property type="entry name" value="Translation initiation factor IF- 2, domain 3"/>
    <property type="match status" value="1"/>
</dbReference>
<dbReference type="HAMAP" id="MF_00100_B">
    <property type="entry name" value="IF_2_B"/>
    <property type="match status" value="1"/>
</dbReference>
<dbReference type="InterPro" id="IPR009061">
    <property type="entry name" value="DNA-bd_dom_put_sf"/>
</dbReference>
<dbReference type="InterPro" id="IPR053905">
    <property type="entry name" value="EF-G-like_DII"/>
</dbReference>
<dbReference type="InterPro" id="IPR013575">
    <property type="entry name" value="IF2_assoc_dom_bac"/>
</dbReference>
<dbReference type="InterPro" id="IPR044145">
    <property type="entry name" value="IF2_II"/>
</dbReference>
<dbReference type="InterPro" id="IPR006847">
    <property type="entry name" value="IF2_N"/>
</dbReference>
<dbReference type="InterPro" id="IPR027417">
    <property type="entry name" value="P-loop_NTPase"/>
</dbReference>
<dbReference type="InterPro" id="IPR005225">
    <property type="entry name" value="Small_GTP-bd"/>
</dbReference>
<dbReference type="InterPro" id="IPR000795">
    <property type="entry name" value="T_Tr_GTP-bd_dom"/>
</dbReference>
<dbReference type="InterPro" id="IPR000178">
    <property type="entry name" value="TF_IF2_bacterial-like"/>
</dbReference>
<dbReference type="InterPro" id="IPR015760">
    <property type="entry name" value="TIF_IF2"/>
</dbReference>
<dbReference type="InterPro" id="IPR023115">
    <property type="entry name" value="TIF_IF2_dom3"/>
</dbReference>
<dbReference type="InterPro" id="IPR036925">
    <property type="entry name" value="TIF_IF2_dom3_sf"/>
</dbReference>
<dbReference type="InterPro" id="IPR009000">
    <property type="entry name" value="Transl_B-barrel_sf"/>
</dbReference>
<dbReference type="NCBIfam" id="TIGR00487">
    <property type="entry name" value="IF-2"/>
    <property type="match status" value="1"/>
</dbReference>
<dbReference type="NCBIfam" id="TIGR00231">
    <property type="entry name" value="small_GTP"/>
    <property type="match status" value="1"/>
</dbReference>
<dbReference type="PANTHER" id="PTHR43381:SF5">
    <property type="entry name" value="TR-TYPE G DOMAIN-CONTAINING PROTEIN"/>
    <property type="match status" value="1"/>
</dbReference>
<dbReference type="PANTHER" id="PTHR43381">
    <property type="entry name" value="TRANSLATION INITIATION FACTOR IF-2-RELATED"/>
    <property type="match status" value="1"/>
</dbReference>
<dbReference type="Pfam" id="PF22042">
    <property type="entry name" value="EF-G_D2"/>
    <property type="match status" value="1"/>
</dbReference>
<dbReference type="Pfam" id="PF00009">
    <property type="entry name" value="GTP_EFTU"/>
    <property type="match status" value="1"/>
</dbReference>
<dbReference type="Pfam" id="PF11987">
    <property type="entry name" value="IF-2"/>
    <property type="match status" value="1"/>
</dbReference>
<dbReference type="Pfam" id="PF08364">
    <property type="entry name" value="IF2_assoc"/>
    <property type="match status" value="1"/>
</dbReference>
<dbReference type="Pfam" id="PF04760">
    <property type="entry name" value="IF2_N"/>
    <property type="match status" value="2"/>
</dbReference>
<dbReference type="SUPFAM" id="SSF52156">
    <property type="entry name" value="Initiation factor IF2/eIF5b, domain 3"/>
    <property type="match status" value="1"/>
</dbReference>
<dbReference type="SUPFAM" id="SSF52540">
    <property type="entry name" value="P-loop containing nucleoside triphosphate hydrolases"/>
    <property type="match status" value="1"/>
</dbReference>
<dbReference type="SUPFAM" id="SSF46955">
    <property type="entry name" value="Putative DNA-binding domain"/>
    <property type="match status" value="1"/>
</dbReference>
<dbReference type="SUPFAM" id="SSF50447">
    <property type="entry name" value="Translation proteins"/>
    <property type="match status" value="2"/>
</dbReference>
<dbReference type="PROSITE" id="PS51722">
    <property type="entry name" value="G_TR_2"/>
    <property type="match status" value="1"/>
</dbReference>
<dbReference type="PROSITE" id="PS01176">
    <property type="entry name" value="IF2"/>
    <property type="match status" value="1"/>
</dbReference>
<accession>C3K259</accession>
<proteinExistence type="inferred from homology"/>
<sequence>MTQVTVKQLADEVKTPVERLLQQMREAGLPHTAADEGVSDSEKQSLLTHLKSSHKAKVEEPRKITLQRKTTSTLRVAGSKSISVEVRKKKVFVQRSPEEIEAERKRELEERRAVENAARQKAEEEAKRRAEEEARRQPAAAQPAGTEAVAAPVAPVEAVREAAPVAAAPAPAADARKRDEPRRPDKPRADDNNRRGGGGDGERKNAPHRASVKEKAPAPRVAPRTTDEESDGFRRGGRGKAKLKKRNAHGFQSPTGPVVRDVQIGETITVGDLANQMSVKAAEIIKFMFKLGTPATINQVLDQETAQLVAEELGHKVTLVSDTALEDSLAESLKFEGETFSRAPVVTVMGHVDHGKTSLLDYIRRAKVAAGEAGGITQHIGAYHVETERGMVTFLDTPGHAAFTAMRARGAKATDIVILVVAADDGVMPQTIEAVQHAKAAGVPLVVAVNKIDKPGADLDRIRSELSVHGVTSEEWGGDTPFVSVSAKVGTGVDELLEAVLLQAEVLELKATPSAPGRGVVVESRLDKGRGPVATVLVQDGTLRQGDMVLVGSNYGRVRAMLDENGKPIKEAGPSIPVEILGLDGTPDAGDEMSVLSDEKKAREVALFRQGKFREVKLARAHAGKLENIFENMGQAEKKTLNIVLKSDVRGSLEALNGALNGLGNDEVQVRVVGGGVGGITESDANLALASNAVLFGFNVRADAGARKIVEQEGLDMRYYNVIYDIIEDVKKALTGMLGSDVRENILGVAEVRDVFRSPKFGAIAGCMVIEGTVYRNRPIRVLREDIVIFEGELESLRRFKDDASEVRAGMECGIGVKSYNDVKAGDKIEVYEKVQVARSL</sequence>
<protein>
    <recommendedName>
        <fullName evidence="2">Translation initiation factor IF-2</fullName>
    </recommendedName>
</protein>